<comment type="subcellular location">
    <subcellularLocation>
        <location evidence="5">Secreted</location>
    </subcellularLocation>
</comment>
<comment type="mass spectrometry" mass="1359.73" method="Electrospray" evidence="2">
    <molecule>Neuropeptide-like 1-1</molecule>
    <text>Neuropeptide-like 1-1.</text>
</comment>
<comment type="mass spectrometry" mass="1358.72" method="Electrospray" evidence="2">
    <molecule>Neuropeptide-like 1-2</molecule>
    <text>Neuropeptide-like 1-2.</text>
</comment>
<comment type="mass spectrometry" mass="1471.8" method="Electrospray" evidence="2">
    <molecule>Neuropeptide-like 1-3</molecule>
    <text>Neuropeptide-like 1-3.</text>
</comment>
<comment type="mass spectrometry" mass="1611.83" method="Electrospray" evidence="2">
    <molecule>Neuropeptide-like 1-4</molecule>
    <text>Neuropeptide-like 1-4.</text>
</comment>
<comment type="mass spectrometry" mass="1375.73" method="Electrospray" evidence="2">
    <molecule>Neuropeptide-like 1-5</molecule>
    <text>Neuropeptide-like 1-5.</text>
</comment>
<comment type="mass spectrometry" mass="2048.96" method="Electrospray" evidence="2">
    <molecule>Neuropeptide-like 1-6</molecule>
    <text>Neuropeptide-like 1-6.</text>
</comment>
<comment type="mass spectrometry" mass="2036.12" method="Electrospray" evidence="2">
    <molecule>Neuropeptide-like 1-7</molecule>
    <text>Neuropeptide-like 1-7.</text>
</comment>
<keyword id="KW-0027">Amidation</keyword>
<keyword id="KW-0165">Cleavage on pair of basic residues</keyword>
<keyword id="KW-0903">Direct protein sequencing</keyword>
<keyword id="KW-0527">Neuropeptide</keyword>
<keyword id="KW-1185">Reference proteome</keyword>
<keyword id="KW-0964">Secreted</keyword>
<name>NPLP1_CAMFO</name>
<organism>
    <name type="scientific">Camponotus floridanus</name>
    <name type="common">Florida carpenter ant</name>
    <dbReference type="NCBI Taxonomy" id="104421"/>
    <lineage>
        <taxon>Eukaryota</taxon>
        <taxon>Metazoa</taxon>
        <taxon>Ecdysozoa</taxon>
        <taxon>Arthropoda</taxon>
        <taxon>Hexapoda</taxon>
        <taxon>Insecta</taxon>
        <taxon>Pterygota</taxon>
        <taxon>Neoptera</taxon>
        <taxon>Endopterygota</taxon>
        <taxon>Hymenoptera</taxon>
        <taxon>Apocrita</taxon>
        <taxon>Aculeata</taxon>
        <taxon>Formicoidea</taxon>
        <taxon>Formicidae</taxon>
        <taxon>Formicinae</taxon>
        <taxon>Camponotus</taxon>
    </lineage>
</organism>
<protein>
    <recommendedName>
        <fullName evidence="6">Neuropeptide-like 1</fullName>
    </recommendedName>
    <component>
        <recommendedName>
            <fullName evidence="3">Neuropeptide-like 1-1</fullName>
        </recommendedName>
    </component>
    <component>
        <recommendedName>
            <fullName evidence="3">Neuropeptide-like 1-2</fullName>
        </recommendedName>
    </component>
    <component>
        <recommendedName>
            <fullName evidence="3">Neuropeptide-like 1-3</fullName>
        </recommendedName>
    </component>
    <component>
        <recommendedName>
            <fullName evidence="3">Neuropeptide-like 1-4</fullName>
        </recommendedName>
    </component>
    <component>
        <recommendedName>
            <fullName evidence="3">Neuropeptide-like 1-5</fullName>
        </recommendedName>
    </component>
    <component>
        <recommendedName>
            <fullName evidence="3">Neuropeptide-like 1-6</fullName>
        </recommendedName>
    </component>
    <component>
        <recommendedName>
            <fullName evidence="3">Neuropeptide-like 1-7</fullName>
        </recommendedName>
    </component>
</protein>
<accession>E1ZXU8</accession>
<proteinExistence type="evidence at protein level"/>
<gene>
    <name evidence="6" type="ORF">EAG_05659</name>
</gene>
<evidence type="ECO:0000256" key="1">
    <source>
        <dbReference type="SAM" id="MobiDB-lite"/>
    </source>
</evidence>
<evidence type="ECO:0000269" key="2">
    <source>
    </source>
</evidence>
<evidence type="ECO:0000303" key="3">
    <source>
    </source>
</evidence>
<evidence type="ECO:0000305" key="4"/>
<evidence type="ECO:0000305" key="5">
    <source>
    </source>
</evidence>
<evidence type="ECO:0000312" key="6">
    <source>
        <dbReference type="EMBL" id="EFN73979.1"/>
    </source>
</evidence>
<dbReference type="EMBL" id="GL435132">
    <property type="protein sequence ID" value="EFN73979.1"/>
    <property type="molecule type" value="Genomic_DNA"/>
</dbReference>
<dbReference type="OMA" id="DCRHGFK"/>
<dbReference type="OrthoDB" id="6426745at2759"/>
<dbReference type="Proteomes" id="UP000000311">
    <property type="component" value="Unassembled WGS sequence"/>
</dbReference>
<dbReference type="GO" id="GO:0005576">
    <property type="term" value="C:extracellular region"/>
    <property type="evidence" value="ECO:0007669"/>
    <property type="project" value="UniProtKB-SubCell"/>
</dbReference>
<dbReference type="GO" id="GO:0007218">
    <property type="term" value="P:neuropeptide signaling pathway"/>
    <property type="evidence" value="ECO:0007669"/>
    <property type="project" value="UniProtKB-KW"/>
</dbReference>
<feature type="propeptide" id="PRO_0000434224" evidence="5">
    <location>
        <begin position="1"/>
        <end position="179"/>
    </location>
</feature>
<feature type="peptide" id="PRO_0000434225" description="Neuropeptide-like 1-1" evidence="2">
    <location>
        <begin position="182"/>
        <end position="194"/>
    </location>
</feature>
<feature type="peptide" id="PRO_0000434226" description="Neuropeptide-like 1-2" evidence="2">
    <location>
        <begin position="198"/>
        <end position="210"/>
    </location>
</feature>
<feature type="peptide" id="PRO_0000434227" description="Neuropeptide-like 1-3" evidence="2">
    <location>
        <begin position="214"/>
        <end position="227"/>
    </location>
</feature>
<feature type="peptide" id="PRO_0000434228" description="Neuropeptide-like 1-4" evidence="2">
    <location>
        <begin position="231"/>
        <end position="244"/>
    </location>
</feature>
<feature type="peptide" id="PRO_0000434229" description="Neuropeptide-like 1-5" evidence="2">
    <location>
        <begin position="248"/>
        <end position="260"/>
    </location>
</feature>
<feature type="peptide" id="PRO_0000434230" description="Neuropeptide-like 1-6" evidence="2">
    <location>
        <begin position="264"/>
        <end position="281"/>
    </location>
</feature>
<feature type="propeptide" id="PRO_0000434231" evidence="5">
    <location>
        <begin position="285"/>
        <end position="299"/>
    </location>
</feature>
<feature type="peptide" id="PRO_0000434232" description="Neuropeptide-like 1-7" evidence="2">
    <location>
        <begin position="302"/>
        <end position="318"/>
    </location>
</feature>
<feature type="propeptide" id="PRO_0000434233" evidence="5">
    <location>
        <begin position="321"/>
        <end position="588"/>
    </location>
</feature>
<feature type="region of interest" description="Disordered" evidence="1">
    <location>
        <begin position="115"/>
        <end position="143"/>
    </location>
</feature>
<feature type="region of interest" description="Disordered" evidence="1">
    <location>
        <begin position="342"/>
        <end position="382"/>
    </location>
</feature>
<feature type="modified residue" description="Threonine amide" evidence="2">
    <location>
        <position position="194"/>
    </location>
</feature>
<feature type="modified residue" description="Serine amide" evidence="2">
    <location>
        <position position="210"/>
    </location>
</feature>
<feature type="modified residue" description="Serine amide" evidence="2">
    <location>
        <position position="227"/>
    </location>
</feature>
<feature type="modified residue" description="Serine amide" evidence="2">
    <location>
        <position position="244"/>
    </location>
</feature>
<feature type="modified residue" description="Tyrosine amide" evidence="2">
    <location>
        <position position="260"/>
    </location>
</feature>
<feature type="modified residue" description="Glutamic acid 1-amide" evidence="2">
    <location>
        <position position="281"/>
    </location>
</feature>
<feature type="modified residue" description="Tyrosine amide" evidence="2">
    <location>
        <position position="318"/>
    </location>
</feature>
<reference key="1">
    <citation type="journal article" date="2010" name="Science">
        <title>Genomic comparison of the ants Camponotus floridanus and Harpegnathos saltator.</title>
        <authorList>
            <person name="Bonasio R."/>
            <person name="Zhang G."/>
            <person name="Ye C."/>
            <person name="Mutti N.S."/>
            <person name="Fang X."/>
            <person name="Qin N."/>
            <person name="Donahue G."/>
            <person name="Yang P."/>
            <person name="Li Q."/>
            <person name="Li C."/>
            <person name="Zhang P."/>
            <person name="Huang Z."/>
            <person name="Berger S.L."/>
            <person name="Reinberg D."/>
            <person name="Wang J."/>
            <person name="Liebig J."/>
        </authorList>
    </citation>
    <scope>NUCLEOTIDE SEQUENCE [LARGE SCALE GENOMIC DNA]</scope>
</reference>
<reference evidence="4" key="2">
    <citation type="journal article" date="2015" name="J. Proteome Res.">
        <title>Neuropeptidomics of the carpenter ant Camponotus floridanus.</title>
        <authorList>
            <person name="Schmitt F."/>
            <person name="Vanselow J.T."/>
            <person name="Schlosser A."/>
            <person name="Kahnt J."/>
            <person name="Roessler W."/>
            <person name="Wegener C."/>
        </authorList>
    </citation>
    <scope>PROTEIN SEQUENCE OF 182-194; 198-210; 214-227; 231-244; 248-260; 264-281 AND 302-318</scope>
    <scope>TISSUE SPECIFICITY</scope>
    <scope>MASS SPECTROMETRY</scope>
    <scope>IDENTIFICATION BY MASS SPECTROMETRY</scope>
    <scope>AMIDATION AT THR-194; SER-210; SER-227; SER-244; TYR-260; GLU-281 AND TYR-318</scope>
</reference>
<sequence length="588" mass="67266">MQCIPKKTFMAMLRIPEVRSNLAAYLRTALMVQEVKNHDDMVHLKALSSEENEDFEICIPGGTYLELFRNPVLRSHLSAMERSYKFPGRFLSEEVDSRDLIPESEKRSLATLAKNGDLPITIQERESDNDDEEKRSASSSDNVGSLHELFDEVSYRRRTPEIYDYLTEQDPEVLEYSPDKRNVGSLARDFALPTGRRHIASVARDHGLPSGKRNVGSLARQSMLPLSGKRNVASLARYYMLPQSGKRNVAALARDSSLPYGKRYLGSLARSGSYPTRDYDEGKRSIASLARSGDWPSVAKRGRMTSGRIMARVLNRRYGRSLSDDREAPSEPLDLQQLIRQGNSEGKENEWQATPFTVSEDLDEGKAKNRSNRRIEASQTRHKRQIDFSDEYPLPVMQNNMLDYEDMMEAIADHYPNAEKRFMGQTVSQPPLRVFRRVLFSYLDVMSTVFCRTCNQVEPHLLQTEKIYHIYVCQYQQIYQPHHVKDNPNTNEPTTMYNHYVQKKCSPMSSSSTHGIITVVRENPADGSSSNYTPDASTRSLRPIFTPKTRYLQSLHGDCRHGFKRFLLLPDIDNFLRTSNSHIAPRSM</sequence>